<dbReference type="EMBL" id="AY282568">
    <property type="protein sequence ID" value="AAP40290.1"/>
    <property type="molecule type" value="Genomic_DNA"/>
</dbReference>
<dbReference type="EMBL" id="AAFI02000149">
    <property type="protein sequence ID" value="EAL62508.1"/>
    <property type="molecule type" value="Genomic_DNA"/>
</dbReference>
<dbReference type="RefSeq" id="XP_636022.1">
    <property type="nucleotide sequence ID" value="XM_630930.1"/>
</dbReference>
<dbReference type="FunCoup" id="Q7Z203">
    <property type="interactions" value="200"/>
</dbReference>
<dbReference type="CAZy" id="CBM13">
    <property type="family name" value="Carbohydrate-Binding Module Family 13"/>
</dbReference>
<dbReference type="PaxDb" id="44689-DDB0191376"/>
<dbReference type="EnsemblProtists" id="EAL62508">
    <property type="protein sequence ID" value="EAL62508"/>
    <property type="gene ID" value="DDB_G0289815"/>
</dbReference>
<dbReference type="GeneID" id="8627348"/>
<dbReference type="KEGG" id="ddi:DDB_G0289815"/>
<dbReference type="dictyBase" id="DDB_G0289815">
    <property type="gene designation" value="cupB"/>
</dbReference>
<dbReference type="VEuPathDB" id="AmoebaDB:DDB_G0289815"/>
<dbReference type="HOGENOM" id="CLU_020711_0_0_1"/>
<dbReference type="InParanoid" id="Q7Z203"/>
<dbReference type="PhylomeDB" id="Q7Z203"/>
<dbReference type="PRO" id="PR:Q7Z203"/>
<dbReference type="Proteomes" id="UP000002195">
    <property type="component" value="Chromosome 5"/>
</dbReference>
<dbReference type="GO" id="GO:0005737">
    <property type="term" value="C:cytoplasm"/>
    <property type="evidence" value="ECO:0000314"/>
    <property type="project" value="dictyBase"/>
</dbReference>
<dbReference type="GO" id="GO:0016020">
    <property type="term" value="C:membrane"/>
    <property type="evidence" value="ECO:0007669"/>
    <property type="project" value="UniProtKB-SubCell"/>
</dbReference>
<dbReference type="GO" id="GO:0005634">
    <property type="term" value="C:nucleus"/>
    <property type="evidence" value="ECO:0000314"/>
    <property type="project" value="dictyBase"/>
</dbReference>
<dbReference type="GO" id="GO:0030246">
    <property type="term" value="F:carbohydrate binding"/>
    <property type="evidence" value="ECO:0007669"/>
    <property type="project" value="UniProtKB-KW"/>
</dbReference>
<dbReference type="GO" id="GO:0043157">
    <property type="term" value="P:response to cation stress"/>
    <property type="evidence" value="ECO:0000314"/>
    <property type="project" value="dictyBase"/>
</dbReference>
<dbReference type="GO" id="GO:0030587">
    <property type="term" value="P:sorocarp development"/>
    <property type="evidence" value="ECO:0000315"/>
    <property type="project" value="dictyBase"/>
</dbReference>
<dbReference type="FunFam" id="2.80.10.50:FF:000086">
    <property type="entry name" value="Calcium up-regulated protein A"/>
    <property type="match status" value="1"/>
</dbReference>
<dbReference type="FunFam" id="2.80.10.50:FF:000098">
    <property type="entry name" value="Calcium up-regulated protein A"/>
    <property type="match status" value="1"/>
</dbReference>
<dbReference type="Gene3D" id="2.80.10.50">
    <property type="match status" value="2"/>
</dbReference>
<dbReference type="InterPro" id="IPR051780">
    <property type="entry name" value="Ca_Up-reg_Membrane_Reg"/>
</dbReference>
<dbReference type="InterPro" id="IPR035992">
    <property type="entry name" value="Ricin_B-like_lectins"/>
</dbReference>
<dbReference type="InterPro" id="IPR000772">
    <property type="entry name" value="Ricin_B_lectin"/>
</dbReference>
<dbReference type="PANTHER" id="PTHR31599">
    <property type="entry name" value="CALCIUM UP-REGULATED PROTEIN A-RELATED"/>
    <property type="match status" value="1"/>
</dbReference>
<dbReference type="PANTHER" id="PTHR31599:SF2">
    <property type="entry name" value="CALCIUM UP-REGULATED PROTEIN A-RELATED"/>
    <property type="match status" value="1"/>
</dbReference>
<dbReference type="Pfam" id="PF00652">
    <property type="entry name" value="Ricin_B_lectin"/>
    <property type="match status" value="1"/>
</dbReference>
<dbReference type="SUPFAM" id="SSF50370">
    <property type="entry name" value="Ricin B-like lectins"/>
    <property type="match status" value="2"/>
</dbReference>
<dbReference type="PROSITE" id="PS50231">
    <property type="entry name" value="RICIN_B_LECTIN"/>
    <property type="match status" value="2"/>
</dbReference>
<accession>Q7Z203</accession>
<accession>Q54GY5</accession>
<evidence type="ECO:0000255" key="1">
    <source>
        <dbReference type="PROSITE-ProRule" id="PRU00174"/>
    </source>
</evidence>
<evidence type="ECO:0000256" key="2">
    <source>
        <dbReference type="SAM" id="MobiDB-lite"/>
    </source>
</evidence>
<evidence type="ECO:0000269" key="3">
    <source>
    </source>
</evidence>
<evidence type="ECO:0000305" key="4"/>
<organism>
    <name type="scientific">Dictyostelium discoideum</name>
    <name type="common">Social amoeba</name>
    <dbReference type="NCBI Taxonomy" id="44689"/>
    <lineage>
        <taxon>Eukaryota</taxon>
        <taxon>Amoebozoa</taxon>
        <taxon>Evosea</taxon>
        <taxon>Eumycetozoa</taxon>
        <taxon>Dictyostelia</taxon>
        <taxon>Dictyosteliales</taxon>
        <taxon>Dictyosteliaceae</taxon>
        <taxon>Dictyostelium</taxon>
    </lineage>
</organism>
<reference key="1">
    <citation type="journal article" date="2004" name="Eukaryot. Cell">
        <title>The Ca2+/calcineurin-regulated cup gene family in Dictyostelium discoideum and its possible involvement in development.</title>
        <authorList>
            <person name="Coukell B."/>
            <person name="Li Y."/>
            <person name="Moniakis J."/>
            <person name="Cameron A."/>
        </authorList>
    </citation>
    <scope>NUCLEOTIDE SEQUENCE [GENOMIC DNA]</scope>
    <scope>POSSIBLE FUNCTION</scope>
    <scope>SUBCELLULAR LOCATION</scope>
    <scope>DEVELOPMENTAL STAGE</scope>
    <scope>INDUCTION</scope>
</reference>
<reference key="2">
    <citation type="journal article" date="2005" name="Nature">
        <title>The genome of the social amoeba Dictyostelium discoideum.</title>
        <authorList>
            <person name="Eichinger L."/>
            <person name="Pachebat J.A."/>
            <person name="Gloeckner G."/>
            <person name="Rajandream M.A."/>
            <person name="Sucgang R."/>
            <person name="Berriman M."/>
            <person name="Song J."/>
            <person name="Olsen R."/>
            <person name="Szafranski K."/>
            <person name="Xu Q."/>
            <person name="Tunggal B."/>
            <person name="Kummerfeld S."/>
            <person name="Madera M."/>
            <person name="Konfortov B.A."/>
            <person name="Rivero F."/>
            <person name="Bankier A.T."/>
            <person name="Lehmann R."/>
            <person name="Hamlin N."/>
            <person name="Davies R."/>
            <person name="Gaudet P."/>
            <person name="Fey P."/>
            <person name="Pilcher K."/>
            <person name="Chen G."/>
            <person name="Saunders D."/>
            <person name="Sodergren E.J."/>
            <person name="Davis P."/>
            <person name="Kerhornou A."/>
            <person name="Nie X."/>
            <person name="Hall N."/>
            <person name="Anjard C."/>
            <person name="Hemphill L."/>
            <person name="Bason N."/>
            <person name="Farbrother P."/>
            <person name="Desany B."/>
            <person name="Just E."/>
            <person name="Morio T."/>
            <person name="Rost R."/>
            <person name="Churcher C.M."/>
            <person name="Cooper J."/>
            <person name="Haydock S."/>
            <person name="van Driessche N."/>
            <person name="Cronin A."/>
            <person name="Goodhead I."/>
            <person name="Muzny D.M."/>
            <person name="Mourier T."/>
            <person name="Pain A."/>
            <person name="Lu M."/>
            <person name="Harper D."/>
            <person name="Lindsay R."/>
            <person name="Hauser H."/>
            <person name="James K.D."/>
            <person name="Quiles M."/>
            <person name="Madan Babu M."/>
            <person name="Saito T."/>
            <person name="Buchrieser C."/>
            <person name="Wardroper A."/>
            <person name="Felder M."/>
            <person name="Thangavelu M."/>
            <person name="Johnson D."/>
            <person name="Knights A."/>
            <person name="Loulseged H."/>
            <person name="Mungall K.L."/>
            <person name="Oliver K."/>
            <person name="Price C."/>
            <person name="Quail M.A."/>
            <person name="Urushihara H."/>
            <person name="Hernandez J."/>
            <person name="Rabbinowitsch E."/>
            <person name="Steffen D."/>
            <person name="Sanders M."/>
            <person name="Ma J."/>
            <person name="Kohara Y."/>
            <person name="Sharp S."/>
            <person name="Simmonds M.N."/>
            <person name="Spiegler S."/>
            <person name="Tivey A."/>
            <person name="Sugano S."/>
            <person name="White B."/>
            <person name="Walker D."/>
            <person name="Woodward J.R."/>
            <person name="Winckler T."/>
            <person name="Tanaka Y."/>
            <person name="Shaulsky G."/>
            <person name="Schleicher M."/>
            <person name="Weinstock G.M."/>
            <person name="Rosenthal A."/>
            <person name="Cox E.C."/>
            <person name="Chisholm R.L."/>
            <person name="Gibbs R.A."/>
            <person name="Loomis W.F."/>
            <person name="Platzer M."/>
            <person name="Kay R.R."/>
            <person name="Williams J.G."/>
            <person name="Dear P.H."/>
            <person name="Noegel A.A."/>
            <person name="Barrell B.G."/>
            <person name="Kuspa A."/>
        </authorList>
    </citation>
    <scope>NUCLEOTIDE SEQUENCE [LARGE SCALE GENOMIC DNA]</scope>
    <source>
        <strain>AX4</strain>
    </source>
</reference>
<gene>
    <name type="primary">cupB</name>
    <name type="ORF">DDB_G0289815</name>
</gene>
<comment type="function">
    <text>May play an important role in stabilizing and/or regulating the cell membrane during Ca(2+) stress or certain stages of development.</text>
</comment>
<comment type="subcellular location">
    <subcellularLocation>
        <location evidence="3">Cytoplasm</location>
    </subcellularLocation>
    <subcellularLocation>
        <location evidence="3">Membrane</location>
        <topology evidence="3">Peripheral membrane protein</topology>
    </subcellularLocation>
    <text>Associates with the cell membrane during Ca(2+) stress and cell aggregation.</text>
</comment>
<comment type="developmental stage">
    <text evidence="3">Expressed at high levels during aggregation and late development and at low levels during the slug stage.</text>
</comment>
<comment type="induction">
    <text evidence="3">Induced by high levels of extracellular Ca(2+).</text>
</comment>
<comment type="similarity">
    <text evidence="4">Belongs to the cup family.</text>
</comment>
<sequence>MINIEDISKSSNQSEEKQLKSTSSKPKYSFAAKSLFKGSNNITPYYLSTSNTFQCVASESIQTWLLSDDGHIFTSSGNFVLDVSSGGYFVELVQLNSNSKTQIWTIDTTNNKIQNQGNGKYLDIDNLNICVAPLNGNATQQWTTFRRAPIPTGNWGYFQSKQMDSNNNYWGLSVLNNSKSYNTSVVMNKVQAKSKGQIWQMTNDGHILSRLDGSLVLDIGPSINGSTTNYYLDTNVYKANDLKQQWGINENNQIFNQYYPNLCIGFVGELGVDSTVNCVLAQPSSASDINFQWITNPTYSLNEIVSEVPEPFPAYTSGDLLASYQYLSNIATSNFTDDIRSLYTGINVSLQSFLSIVTNATCPSSIHSTEDFSNVQNQIKTELIYAIDVRLVFENYSGFYSKLFSQGSSNLTNLANLINVDMSSNQMVNANYTDAITSVFYSLISEIPVGGSIIANIGQSAVEWGELISQSNYQGASTYQVELSQLYSHLNTNYENEMANAQSMKDTILQDWGMMSKTYALCFLPTNDPSSLNINGLNFEKISDVASVAYEIAMIQMLLPTTYQIYFTPAGYWVPYSDGDFAYSDNSGTYIMATIEYSNSYPPKELTDKLWNNGVSKQEFFWSAYGWNLATSLTYYNMANKFGNIYKLAFPTIKNFTGVPMQFVMTNDGDNLCNFPVKTHFAKFFSIYYSCGDLGHHYFDIAVNDINDNKVANFTVDINLEAIEGSYVSIKTGSLVVQPGYAVGNPICNQGSYSLMFSASILIPIYKSE</sequence>
<keyword id="KW-0963">Cytoplasm</keyword>
<keyword id="KW-0430">Lectin</keyword>
<keyword id="KW-0472">Membrane</keyword>
<keyword id="KW-1185">Reference proteome</keyword>
<keyword id="KW-0677">Repeat</keyword>
<name>CUPB_DICDI</name>
<feature type="chain" id="PRO_0000327950" description="Calcium up-regulated protein B">
    <location>
        <begin position="1"/>
        <end position="769"/>
    </location>
</feature>
<feature type="domain" description="Ricin B-type lectin 1" evidence="1">
    <location>
        <begin position="25"/>
        <end position="145"/>
    </location>
</feature>
<feature type="domain" description="Ricin B-type lectin 2" evidence="1">
    <location>
        <begin position="158"/>
        <end position="296"/>
    </location>
</feature>
<feature type="region of interest" description="Disordered" evidence="2">
    <location>
        <begin position="1"/>
        <end position="22"/>
    </location>
</feature>
<protein>
    <recommendedName>
        <fullName>Calcium up-regulated protein B</fullName>
    </recommendedName>
</protein>
<proteinExistence type="evidence at transcript level"/>